<gene>
    <name type="primary">PDF1.2C</name>
    <name type="ordered locus">At5g44430</name>
    <name type="ORF">MFC16.9</name>
</gene>
<comment type="function">
    <text>Confers broad-spectrum resistance to pathogens.</text>
</comment>
<comment type="subcellular location">
    <subcellularLocation>
        <location evidence="1">Secreted</location>
    </subcellularLocation>
</comment>
<comment type="similarity">
    <text evidence="3">Belongs to the DEFL family.</text>
</comment>
<organism>
    <name type="scientific">Arabidopsis thaliana</name>
    <name type="common">Mouse-ear cress</name>
    <dbReference type="NCBI Taxonomy" id="3702"/>
    <lineage>
        <taxon>Eukaryota</taxon>
        <taxon>Viridiplantae</taxon>
        <taxon>Streptophyta</taxon>
        <taxon>Embryophyta</taxon>
        <taxon>Tracheophyta</taxon>
        <taxon>Spermatophyta</taxon>
        <taxon>Magnoliopsida</taxon>
        <taxon>eudicotyledons</taxon>
        <taxon>Gunneridae</taxon>
        <taxon>Pentapetalae</taxon>
        <taxon>rosids</taxon>
        <taxon>malvids</taxon>
        <taxon>Brassicales</taxon>
        <taxon>Brassicaceae</taxon>
        <taxon>Camelineae</taxon>
        <taxon>Arabidopsis</taxon>
    </lineage>
</organism>
<dbReference type="EMBL" id="AB017065">
    <property type="protein sequence ID" value="BAB09150.1"/>
    <property type="molecule type" value="Genomic_DNA"/>
</dbReference>
<dbReference type="EMBL" id="CP002688">
    <property type="protein sequence ID" value="AED95108.1"/>
    <property type="molecule type" value="Genomic_DNA"/>
</dbReference>
<dbReference type="RefSeq" id="NP_199256.1">
    <property type="nucleotide sequence ID" value="NM_123810.3"/>
</dbReference>
<dbReference type="SMR" id="Q9FI22"/>
<dbReference type="FunCoup" id="Q9FI22">
    <property type="interactions" value="137"/>
</dbReference>
<dbReference type="STRING" id="3702.Q9FI22"/>
<dbReference type="PaxDb" id="3702-AT5G44430.1"/>
<dbReference type="EnsemblPlants" id="AT5G44430.1">
    <property type="protein sequence ID" value="AT5G44430.1"/>
    <property type="gene ID" value="AT5G44430"/>
</dbReference>
<dbReference type="GeneID" id="834470"/>
<dbReference type="Gramene" id="AT5G44430.1">
    <property type="protein sequence ID" value="AT5G44430.1"/>
    <property type="gene ID" value="AT5G44430"/>
</dbReference>
<dbReference type="KEGG" id="ath:AT5G44430"/>
<dbReference type="Araport" id="AT5G44430"/>
<dbReference type="TAIR" id="AT5G44430">
    <property type="gene designation" value="PDF1.2C"/>
</dbReference>
<dbReference type="eggNOG" id="ENOG502SQS4">
    <property type="taxonomic scope" value="Eukaryota"/>
</dbReference>
<dbReference type="HOGENOM" id="CLU_161668_3_0_1"/>
<dbReference type="InParanoid" id="Q9FI22"/>
<dbReference type="OMA" id="GACHHEG"/>
<dbReference type="PhylomeDB" id="Q9FI22"/>
<dbReference type="PRO" id="PR:Q9FI22"/>
<dbReference type="Proteomes" id="UP000006548">
    <property type="component" value="Chromosome 5"/>
</dbReference>
<dbReference type="ExpressionAtlas" id="Q9FI22">
    <property type="expression patterns" value="baseline and differential"/>
</dbReference>
<dbReference type="GO" id="GO:0005576">
    <property type="term" value="C:extracellular region"/>
    <property type="evidence" value="ECO:0007669"/>
    <property type="project" value="UniProtKB-SubCell"/>
</dbReference>
<dbReference type="GO" id="GO:0006952">
    <property type="term" value="P:defense response"/>
    <property type="evidence" value="ECO:0000250"/>
    <property type="project" value="TAIR"/>
</dbReference>
<dbReference type="GO" id="GO:0050832">
    <property type="term" value="P:defense response to fungus"/>
    <property type="evidence" value="ECO:0007669"/>
    <property type="project" value="UniProtKB-KW"/>
</dbReference>
<dbReference type="GO" id="GO:0031640">
    <property type="term" value="P:killing of cells of another organism"/>
    <property type="evidence" value="ECO:0007669"/>
    <property type="project" value="UniProtKB-KW"/>
</dbReference>
<dbReference type="CDD" id="cd00107">
    <property type="entry name" value="Knot1"/>
    <property type="match status" value="1"/>
</dbReference>
<dbReference type="FunFam" id="3.30.30.10:FF:000003">
    <property type="entry name" value="Defensin-like protein 1"/>
    <property type="match status" value="1"/>
</dbReference>
<dbReference type="Gene3D" id="3.30.30.10">
    <property type="entry name" value="Knottin, scorpion toxin-like"/>
    <property type="match status" value="1"/>
</dbReference>
<dbReference type="InterPro" id="IPR008176">
    <property type="entry name" value="Defensin_plant"/>
</dbReference>
<dbReference type="InterPro" id="IPR003614">
    <property type="entry name" value="Scorpion_toxin-like"/>
</dbReference>
<dbReference type="InterPro" id="IPR036574">
    <property type="entry name" value="Scorpion_toxin-like_sf"/>
</dbReference>
<dbReference type="PANTHER" id="PTHR33147">
    <property type="entry name" value="DEFENSIN-LIKE PROTEIN 1"/>
    <property type="match status" value="1"/>
</dbReference>
<dbReference type="PANTHER" id="PTHR33147:SF37">
    <property type="entry name" value="DEFENSIN-LIKE PROTEIN 14-RELATED"/>
    <property type="match status" value="1"/>
</dbReference>
<dbReference type="Pfam" id="PF00304">
    <property type="entry name" value="Gamma-thionin"/>
    <property type="match status" value="1"/>
</dbReference>
<dbReference type="SMART" id="SM00505">
    <property type="entry name" value="Knot1"/>
    <property type="match status" value="1"/>
</dbReference>
<dbReference type="SUPFAM" id="SSF57095">
    <property type="entry name" value="Scorpion toxin-like"/>
    <property type="match status" value="1"/>
</dbReference>
<dbReference type="PROSITE" id="PS00940">
    <property type="entry name" value="GAMMA_THIONIN"/>
    <property type="match status" value="1"/>
</dbReference>
<keyword id="KW-0929">Antimicrobial</keyword>
<keyword id="KW-1015">Disulfide bond</keyword>
<keyword id="KW-0295">Fungicide</keyword>
<keyword id="KW-0611">Plant defense</keyword>
<keyword id="KW-0873">Pyrrolidone carboxylic acid</keyword>
<keyword id="KW-1185">Reference proteome</keyword>
<keyword id="KW-0964">Secreted</keyword>
<keyword id="KW-0732">Signal</keyword>
<feature type="signal peptide" evidence="1">
    <location>
        <begin position="1"/>
        <end position="29"/>
    </location>
</feature>
<feature type="chain" id="PRO_0000379600" description="Defensin-like protein 17">
    <location>
        <begin position="30"/>
        <end position="80"/>
    </location>
</feature>
<feature type="modified residue" description="Pyrrolidone carboxylic acid" evidence="2">
    <location>
        <position position="30"/>
    </location>
</feature>
<feature type="disulfide bond" evidence="1">
    <location>
        <begin position="33"/>
        <end position="80"/>
    </location>
</feature>
<feature type="disulfide bond" evidence="1">
    <location>
        <begin position="44"/>
        <end position="65"/>
    </location>
</feature>
<feature type="disulfide bond" evidence="1">
    <location>
        <begin position="50"/>
        <end position="74"/>
    </location>
</feature>
<feature type="disulfide bond" evidence="1">
    <location>
        <begin position="54"/>
        <end position="76"/>
    </location>
</feature>
<proteinExistence type="evidence at transcript level"/>
<reference key="1">
    <citation type="journal article" date="1999" name="DNA Res.">
        <title>Structural analysis of Arabidopsis thaliana chromosome 5. IX. Sequence features of the regions of 1,011,550 bp covered by seventeen P1 and TAC clones.</title>
        <authorList>
            <person name="Kaneko T."/>
            <person name="Katoh T."/>
            <person name="Sato S."/>
            <person name="Nakamura Y."/>
            <person name="Asamizu E."/>
            <person name="Kotani H."/>
            <person name="Miyajima N."/>
            <person name="Tabata S."/>
        </authorList>
    </citation>
    <scope>NUCLEOTIDE SEQUENCE [LARGE SCALE GENOMIC DNA]</scope>
    <source>
        <strain>cv. Columbia</strain>
    </source>
</reference>
<reference key="2">
    <citation type="journal article" date="2017" name="Plant J.">
        <title>Araport11: a complete reannotation of the Arabidopsis thaliana reference genome.</title>
        <authorList>
            <person name="Cheng C.Y."/>
            <person name="Krishnakumar V."/>
            <person name="Chan A.P."/>
            <person name="Thibaud-Nissen F."/>
            <person name="Schobel S."/>
            <person name="Town C.D."/>
        </authorList>
    </citation>
    <scope>GENOME REANNOTATION</scope>
    <source>
        <strain>cv. Columbia</strain>
    </source>
</reference>
<reference key="3">
    <citation type="journal article" date="2002" name="Planta">
        <title>Plant defensins.</title>
        <authorList>
            <person name="Thomma B.P.H.J."/>
            <person name="Cammue B.P."/>
            <person name="Thevissen K."/>
        </authorList>
    </citation>
    <scope>GENE FAMILY</scope>
    <scope>NOMENCLATURE</scope>
</reference>
<reference key="4">
    <citation type="journal article" date="2005" name="Plant Physiol.">
        <title>Genome organization of more than 300 defensin-like genes in Arabidopsis.</title>
        <authorList>
            <person name="Silverstein K.A.T."/>
            <person name="Graham M.A."/>
            <person name="Paape T.D."/>
            <person name="VandenBosch K.A."/>
        </authorList>
    </citation>
    <scope>GENE FAMILY</scope>
</reference>
<evidence type="ECO:0000250" key="1"/>
<evidence type="ECO:0000250" key="2">
    <source>
        <dbReference type="UniProtKB" id="P30224"/>
    </source>
</evidence>
<evidence type="ECO:0000305" key="3"/>
<sequence length="80" mass="8550">MAKSATIITFLFAALVLFAAFEAPTMVEAQKLCEKPSGTWSGVCGNSNACKNQCINLEGAKHGSCNYVFPAHKCICYVPC</sequence>
<name>DEF17_ARATH</name>
<accession>Q9FI22</accession>
<protein>
    <recommendedName>
        <fullName>Defensin-like protein 17</fullName>
    </recommendedName>
    <alternativeName>
        <fullName>Plant defensin 1.2c</fullName>
    </alternativeName>
</protein>